<reference key="1">
    <citation type="journal article" date="2005" name="Nat. Biotechnol.">
        <title>The complete genome sequence of the meat-borne lactic acid bacterium Lactobacillus sakei 23K.</title>
        <authorList>
            <person name="Chaillou S."/>
            <person name="Champomier-Verges M.-C."/>
            <person name="Cornet M."/>
            <person name="Crutz-Le Coq A.-M."/>
            <person name="Dudez A.-M."/>
            <person name="Martin V."/>
            <person name="Beaufils S."/>
            <person name="Darbon-Rongere E."/>
            <person name="Bossy R."/>
            <person name="Loux V."/>
            <person name="Zagorec M."/>
        </authorList>
    </citation>
    <scope>NUCLEOTIDE SEQUENCE [LARGE SCALE GENOMIC DNA]</scope>
    <source>
        <strain>23K</strain>
    </source>
</reference>
<gene>
    <name type="ordered locus">LCA_0842</name>
</gene>
<protein>
    <recommendedName>
        <fullName evidence="1">UPF0637 protein LCA_0842</fullName>
    </recommendedName>
</protein>
<accession>Q38XD7</accession>
<evidence type="ECO:0000255" key="1">
    <source>
        <dbReference type="HAMAP-Rule" id="MF_01851"/>
    </source>
</evidence>
<organism>
    <name type="scientific">Latilactobacillus sakei subsp. sakei (strain 23K)</name>
    <name type="common">Lactobacillus sakei subsp. sakei</name>
    <dbReference type="NCBI Taxonomy" id="314315"/>
    <lineage>
        <taxon>Bacteria</taxon>
        <taxon>Bacillati</taxon>
        <taxon>Bacillota</taxon>
        <taxon>Bacilli</taxon>
        <taxon>Lactobacillales</taxon>
        <taxon>Lactobacillaceae</taxon>
        <taxon>Latilactobacillus</taxon>
    </lineage>
</organism>
<feature type="chain" id="PRO_0000348307" description="UPF0637 protein LCA_0842">
    <location>
        <begin position="1"/>
        <end position="201"/>
    </location>
</feature>
<proteinExistence type="inferred from homology"/>
<keyword id="KW-1185">Reference proteome</keyword>
<comment type="similarity">
    <text evidence="1">Belongs to the UPF0637 family.</text>
</comment>
<sequence>MFTRADFEIFDDPTLKGRLNKIYTELDPKFEVFGAQLQNELAVATNREFTLHIAKHLRRFKNPPMNTWMALSESSRGYKMMPHFEVGFGDDRIFVWFALMAEMPDKTDYAPLLASQSEKLLSDFTDYDLSYDHMTKQKFPMSPDNLQLIQDKFAKTKKGEWLLGKVYLKDNPLFDHPEELMADIQTTLLKMVPLYELINAK</sequence>
<dbReference type="EMBL" id="CR936503">
    <property type="protein sequence ID" value="CAI55144.1"/>
    <property type="molecule type" value="Genomic_DNA"/>
</dbReference>
<dbReference type="RefSeq" id="WP_011374546.1">
    <property type="nucleotide sequence ID" value="NC_007576.1"/>
</dbReference>
<dbReference type="SMR" id="Q38XD7"/>
<dbReference type="STRING" id="314315.LCA_0842"/>
<dbReference type="KEGG" id="lsa:LCA_0842"/>
<dbReference type="eggNOG" id="COG4493">
    <property type="taxonomic scope" value="Bacteria"/>
</dbReference>
<dbReference type="HOGENOM" id="CLU_096059_0_0_9"/>
<dbReference type="OrthoDB" id="9812818at2"/>
<dbReference type="Proteomes" id="UP000002707">
    <property type="component" value="Chromosome"/>
</dbReference>
<dbReference type="Gene3D" id="3.30.930.20">
    <property type="entry name" value="Protein of unknown function DUF1054"/>
    <property type="match status" value="1"/>
</dbReference>
<dbReference type="HAMAP" id="MF_01851">
    <property type="entry name" value="UPF0637"/>
    <property type="match status" value="1"/>
</dbReference>
<dbReference type="InterPro" id="IPR009403">
    <property type="entry name" value="UPF0637"/>
</dbReference>
<dbReference type="InterPro" id="IPR053707">
    <property type="entry name" value="UPF0637_domain_sf"/>
</dbReference>
<dbReference type="Pfam" id="PF06335">
    <property type="entry name" value="DUF1054"/>
    <property type="match status" value="1"/>
</dbReference>
<dbReference type="PIRSF" id="PIRSF021332">
    <property type="entry name" value="DUF1054"/>
    <property type="match status" value="1"/>
</dbReference>
<dbReference type="SUPFAM" id="SSF142913">
    <property type="entry name" value="YktB/PF0168-like"/>
    <property type="match status" value="1"/>
</dbReference>
<name>Y842_LATSS</name>